<evidence type="ECO:0000250" key="1"/>
<evidence type="ECO:0000250" key="2">
    <source>
        <dbReference type="UniProtKB" id="O55164"/>
    </source>
</evidence>
<evidence type="ECO:0000250" key="3">
    <source>
        <dbReference type="UniProtKB" id="Q8VBX6"/>
    </source>
</evidence>
<evidence type="ECO:0000255" key="4">
    <source>
        <dbReference type="PROSITE-ProRule" id="PRU00143"/>
    </source>
</evidence>
<evidence type="ECO:0000255" key="5">
    <source>
        <dbReference type="PROSITE-ProRule" id="PRU00365"/>
    </source>
</evidence>
<evidence type="ECO:0000256" key="6">
    <source>
        <dbReference type="SAM" id="MobiDB-lite"/>
    </source>
</evidence>
<evidence type="ECO:0000269" key="7">
    <source>
    </source>
</evidence>
<evidence type="ECO:0000269" key="8">
    <source>
    </source>
</evidence>
<evidence type="ECO:0000269" key="9">
    <source>
    </source>
</evidence>
<evidence type="ECO:0000269" key="10">
    <source>
    </source>
</evidence>
<evidence type="ECO:0000269" key="11">
    <source>
    </source>
</evidence>
<evidence type="ECO:0000269" key="12">
    <source>
    </source>
</evidence>
<evidence type="ECO:0000269" key="13">
    <source>
    </source>
</evidence>
<evidence type="ECO:0000269" key="14">
    <source>
    </source>
</evidence>
<evidence type="ECO:0000269" key="15">
    <source>
    </source>
</evidence>
<evidence type="ECO:0000303" key="16">
    <source>
    </source>
</evidence>
<evidence type="ECO:0000303" key="17">
    <source ref="2"/>
</evidence>
<evidence type="ECO:0000305" key="18"/>
<evidence type="ECO:0007744" key="19">
    <source>
    </source>
</evidence>
<evidence type="ECO:0007744" key="20">
    <source>
    </source>
</evidence>
<evidence type="ECO:0007744" key="21">
    <source>
    </source>
</evidence>
<evidence type="ECO:0007744" key="22">
    <source>
    </source>
</evidence>
<evidence type="ECO:0007829" key="23">
    <source>
        <dbReference type="PDB" id="2FCF"/>
    </source>
</evidence>
<evidence type="ECO:0007829" key="24">
    <source>
        <dbReference type="PDB" id="2FNE"/>
    </source>
</evidence>
<evidence type="ECO:0007829" key="25">
    <source>
        <dbReference type="PDB" id="2IWN"/>
    </source>
</evidence>
<evidence type="ECO:0007829" key="26">
    <source>
        <dbReference type="PDB" id="2IWO"/>
    </source>
</evidence>
<evidence type="ECO:0007829" key="27">
    <source>
        <dbReference type="PDB" id="2O2T"/>
    </source>
</evidence>
<evidence type="ECO:0007829" key="28">
    <source>
        <dbReference type="PDB" id="2OPG"/>
    </source>
</evidence>
<evidence type="ECO:0007829" key="29">
    <source>
        <dbReference type="PDB" id="2QG1"/>
    </source>
</evidence>
<organism>
    <name type="scientific">Homo sapiens</name>
    <name type="common">Human</name>
    <dbReference type="NCBI Taxonomy" id="9606"/>
    <lineage>
        <taxon>Eukaryota</taxon>
        <taxon>Metazoa</taxon>
        <taxon>Chordata</taxon>
        <taxon>Craniata</taxon>
        <taxon>Vertebrata</taxon>
        <taxon>Euteleostomi</taxon>
        <taxon>Mammalia</taxon>
        <taxon>Eutheria</taxon>
        <taxon>Euarchontoglires</taxon>
        <taxon>Primates</taxon>
        <taxon>Haplorrhini</taxon>
        <taxon>Catarrhini</taxon>
        <taxon>Hominidae</taxon>
        <taxon>Homo</taxon>
    </lineage>
</organism>
<sequence length="2070" mass="221618">MLEAIDKNRALHAAERLQTKLRERGDVANEDKLSLLKSVLQSPLFSQILSLQTSVQQLKDQVNIATSATSNIEYAHVPHLSPAVIPTLQNESFLLSPNNGNLEALTGPGIPHINGKPACDEFDQLIKNMAQGRHVEVFELLKPPSGGLGFSVVGLRSENRGELGIFVQEIQEGSVAHRDGRLKETDQILAINGQALDQTITHQQAISILQKAKDTVQLVIARGSLPQLVSPIVSRSPSAASTISAHSNPVHWQHMETIELVNDGSGLGFGIIGGKATGVIVKTILPGGVADQHGRLCSGDHILKIGDTDLAGMSSEQVAQVLRQCGNRVKLMIARGAIEERTAPTALGITLSSSPTSTPELRVDASTQKGEESETFDVELTKNVQGLGITIAGYIGDKKLEPSGIFVKSITKSSAVEHDGRIQIGDQIIAVDGTNLQGFTNQQAVEVLRHTGQTVLLTLMRRGMKQEAELMSREDVTKDADLSPVNASIIKENYEKDEDFLSSTRNTNILPTEEEGYPLLSAEIEEIEDAQKQEAALLTKWQRIMGINYEIVVAHVSKFSENSGLGISLEATVGHHFIRSVLPEGPVGHSGKLFSGDELLEVNGITLLGENHQDVVNILKELPIEVTMVCCRRTVPPTTQSELDSLDLCDIELTEKPHVDLGEFIGSSETEDPVLAMTDAGQSTEEVQAPLAMWEAGIQHIELEKGSKGLGFSILDYQDPIDPASTVIIIRSLVPGGIAEKDGRLLPGDRLMFVNDVNLENSSLEEAVEALKGAPSGTVRIGVAKPLPLSPEEGYVSAKEDSFLYPPHSCEEAGLADKPLFRADLALVGTNDADLVDESTFESPYSPENDSIYSTQASILSLHGSSCGDGLNYGSSLPSSPPKDVIENSCDPVLDLHMSLEELYTQNLLQRQDENTPSVDISMGPASGFTINDYTPANAIEQQYECENTIVWTESHLPSEVISSAELPSVLPDSAGKGSEYLLEQSSLACNAECVMLQNVSKESFERTINIAKGNSSLGMTVSANKDGLGMIVRSIIHGGAISRDGRIAIGDCILSINEESTISVTNAQARAMLRRHSLIGPDIKITYVPAEHLEEFKISLGQQSGRVMALDIFSSYTGRDIPELPEREEGEGEESELQNTAYSNWNQPRRVELWREPSKSLGISIVGGRGMGSRLSNGEVMRGIFIKHVLEDSPAGKNGTLKPGDRIVEVDGMDLRDASHEQAVEAIRKAGNPVVFMVQSIINRPRKSPLPSLLHNLYPKYNFSSTNPFADSLQINADKAPSQSESEPEKAPLCSVPPPPPSAFAEMGSDHTQSSASKISQDVDKEDEFGYSWKNIRERYGTLTGELHMIELEKGHSGLGLSLAGNKDRSRMSVFIVGIDPNGAAGKDGRLQIADELLEINGQILYGRSHQNASSIIKCAPSKVKIIFIRNKDAVNQMAVCPGNAVEPLPSNSENLQNKETEPTVTTSDAAVDLSSFKNVQHLELPKDQGGLGIAISEEDTLSGVIIKSLTEHGVAATDGRLKVGDQILAVDDEIVVGYPIEKFISLLKTAKMTVKLTIHAENPDSQAVPSAAGAASGEKKNSSQSLMVPQSGSPEPESIRNTSRSSTPAIFASDPATCPIIPGCETTIEISKGRTGLGLSIVGGSDTLLGAIIIHEVYEEGAACKDGRLWAGDQILEVNGIDLRKATHDEAINVLRQTPQRVRLTLYRDEAPYKEEEVCDTLTIELQKKPGKGLGLSIVGKRNDTGVFVSDIVKGGIADADGRLMQGDQILMVNGEDVRNATQEAVAALLKCSLGTVTLEVGRIKAGPFHSERRPSQSSQVSEGSLSSFTFPLSGSSTSESLESSSKKNALASEIQGLRTVEMKKGPTDSLGISIAGGVGSPLGDVPIFIAMMHPTGVAAQTQKLRVGDRIVTICGTSTEGMTHTQAVNLLKNASGSIEMQVVAGGDVSVVTGHQQEPASSSLSFTGLTSSSIFQDDLGPPQCKSITLERGPDGLGFSIVGGYGSPHGDLPIYVKTVFAKGAASEDGRLKRGDQIIAVNGQSLEGVTHEEAVAILKRTKGTVTLMVLS</sequence>
<gene>
    <name type="primary">MPDZ</name>
    <name type="synonym">MUPP1</name>
</gene>
<accession>O75970</accession>
<accession>A6NLC2</accession>
<accession>B2RTS3</accession>
<accession>B7ZMI4</accession>
<accession>O43798</accession>
<accession>Q4LE30</accession>
<accession>Q5CZ80</accession>
<accession>Q5JTX3</accession>
<accession>Q5JTX6</accession>
<accession>Q5JTX7</accession>
<accession>Q5JUC3</accession>
<accession>Q5JUC4</accession>
<accession>Q5VZ62</accession>
<accession>Q8N790</accession>
<keyword id="KW-0002">3D-structure</keyword>
<keyword id="KW-0025">Alternative splicing</keyword>
<keyword id="KW-0965">Cell junction</keyword>
<keyword id="KW-1003">Cell membrane</keyword>
<keyword id="KW-0966">Cell projection</keyword>
<keyword id="KW-0945">Host-virus interaction</keyword>
<keyword id="KW-0472">Membrane</keyword>
<keyword id="KW-0488">Methylation</keyword>
<keyword id="KW-0597">Phosphoprotein</keyword>
<keyword id="KW-1267">Proteomics identification</keyword>
<keyword id="KW-1185">Reference proteome</keyword>
<keyword id="KW-0677">Repeat</keyword>
<keyword id="KW-0770">Synapse</keyword>
<keyword id="KW-0771">Synaptosome</keyword>
<keyword id="KW-0796">Tight junction</keyword>
<dbReference type="EMBL" id="AF093419">
    <property type="protein sequence ID" value="AAC61870.1"/>
    <property type="status" value="ALT_SEQ"/>
    <property type="molecule type" value="mRNA"/>
</dbReference>
<dbReference type="EMBL" id="AB210041">
    <property type="protein sequence ID" value="BAE06123.1"/>
    <property type="status" value="ALT_INIT"/>
    <property type="molecule type" value="mRNA"/>
</dbReference>
<dbReference type="EMBL" id="AL161449">
    <property type="status" value="NOT_ANNOTATED_CDS"/>
    <property type="molecule type" value="Genomic_DNA"/>
</dbReference>
<dbReference type="EMBL" id="AL162386">
    <property type="status" value="NOT_ANNOTATED_CDS"/>
    <property type="molecule type" value="Genomic_DNA"/>
</dbReference>
<dbReference type="EMBL" id="AL353639">
    <property type="status" value="NOT_ANNOTATED_CDS"/>
    <property type="molecule type" value="Genomic_DNA"/>
</dbReference>
<dbReference type="EMBL" id="CH471071">
    <property type="protein sequence ID" value="EAW58704.1"/>
    <property type="molecule type" value="Genomic_DNA"/>
</dbReference>
<dbReference type="EMBL" id="BC140793">
    <property type="protein sequence ID" value="AAI40794.1"/>
    <property type="molecule type" value="mRNA"/>
</dbReference>
<dbReference type="EMBL" id="BC144564">
    <property type="protein sequence ID" value="AAI44565.1"/>
    <property type="molecule type" value="mRNA"/>
</dbReference>
<dbReference type="EMBL" id="CR936648">
    <property type="protein sequence ID" value="CAI56786.1"/>
    <property type="status" value="ALT_SEQ"/>
    <property type="molecule type" value="mRNA"/>
</dbReference>
<dbReference type="EMBL" id="AK098775">
    <property type="protein sequence ID" value="BAC05409.1"/>
    <property type="status" value="ALT_INIT"/>
    <property type="molecule type" value="mRNA"/>
</dbReference>
<dbReference type="EMBL" id="AJ001319">
    <property type="protein sequence ID" value="CAA04680.1"/>
    <property type="molecule type" value="mRNA"/>
</dbReference>
<dbReference type="CCDS" id="CCDS47951.1">
    <molecule id="O75970-2"/>
</dbReference>
<dbReference type="CCDS" id="CCDS59119.1">
    <molecule id="O75970-5"/>
</dbReference>
<dbReference type="CCDS" id="CCDS59120.1">
    <molecule id="O75970-3"/>
</dbReference>
<dbReference type="CCDS" id="CCDS83342.1">
    <molecule id="O75970-1"/>
</dbReference>
<dbReference type="RefSeq" id="NP_001248335.1">
    <molecule id="O75970-3"/>
    <property type="nucleotide sequence ID" value="NM_001261406.2"/>
</dbReference>
<dbReference type="RefSeq" id="NP_001248336.1">
    <molecule id="O75970-5"/>
    <property type="nucleotide sequence ID" value="NM_001261407.2"/>
</dbReference>
<dbReference type="RefSeq" id="NP_001317566.1">
    <molecule id="O75970-1"/>
    <property type="nucleotide sequence ID" value="NM_001330637.2"/>
</dbReference>
<dbReference type="RefSeq" id="NP_001362345.1">
    <molecule id="O75970-3"/>
    <property type="nucleotide sequence ID" value="NM_001375416.1"/>
</dbReference>
<dbReference type="RefSeq" id="NP_001362346.1">
    <molecule id="O75970-3"/>
    <property type="nucleotide sequence ID" value="NM_001375417.1"/>
</dbReference>
<dbReference type="RefSeq" id="NP_001362347.1">
    <molecule id="O75970-3"/>
    <property type="nucleotide sequence ID" value="NM_001375418.1"/>
</dbReference>
<dbReference type="RefSeq" id="NP_001362348.1">
    <molecule id="O75970-5"/>
    <property type="nucleotide sequence ID" value="NM_001375419.1"/>
</dbReference>
<dbReference type="RefSeq" id="NP_001365707.1">
    <molecule id="O75970-1"/>
    <property type="nucleotide sequence ID" value="NM_001378778.1"/>
</dbReference>
<dbReference type="RefSeq" id="NP_003820.2">
    <molecule id="O75970-2"/>
    <property type="nucleotide sequence ID" value="NM_003829.5"/>
</dbReference>
<dbReference type="RefSeq" id="XP_006716948.1">
    <property type="nucleotide sequence ID" value="XM_006716885.3"/>
</dbReference>
<dbReference type="RefSeq" id="XP_006716949.1">
    <molecule id="O75970-1"/>
    <property type="nucleotide sequence ID" value="XM_006716886.4"/>
</dbReference>
<dbReference type="RefSeq" id="XP_006716950.1">
    <property type="nucleotide sequence ID" value="XM_006716887.3"/>
</dbReference>
<dbReference type="RefSeq" id="XP_006716951.1">
    <molecule id="O75970-2"/>
    <property type="nucleotide sequence ID" value="XM_006716888.4"/>
</dbReference>
<dbReference type="RefSeq" id="XP_006716952.1">
    <property type="nucleotide sequence ID" value="XM_006716889.3"/>
</dbReference>
<dbReference type="RefSeq" id="XP_006716954.1">
    <property type="nucleotide sequence ID" value="XM_006716891.3"/>
</dbReference>
<dbReference type="RefSeq" id="XP_016870742.1">
    <property type="nucleotide sequence ID" value="XM_017015253.1"/>
</dbReference>
<dbReference type="RefSeq" id="XP_024303476.1">
    <molecule id="O75970-1"/>
    <property type="nucleotide sequence ID" value="XM_024447708.2"/>
</dbReference>
<dbReference type="RefSeq" id="XP_047279965.1">
    <molecule id="O75970-1"/>
    <property type="nucleotide sequence ID" value="XM_047424009.1"/>
</dbReference>
<dbReference type="RefSeq" id="XP_047279966.1">
    <molecule id="O75970-1"/>
    <property type="nucleotide sequence ID" value="XM_047424010.1"/>
</dbReference>
<dbReference type="RefSeq" id="XP_047279968.1">
    <molecule id="O75970-1"/>
    <property type="nucleotide sequence ID" value="XM_047424012.1"/>
</dbReference>
<dbReference type="RefSeq" id="XP_047279969.1">
    <molecule id="O75970-1"/>
    <property type="nucleotide sequence ID" value="XM_047424013.1"/>
</dbReference>
<dbReference type="RefSeq" id="XP_047279970.1">
    <molecule id="O75970-1"/>
    <property type="nucleotide sequence ID" value="XM_047424014.1"/>
</dbReference>
<dbReference type="RefSeq" id="XP_047279971.1">
    <molecule id="O75970-1"/>
    <property type="nucleotide sequence ID" value="XM_047424015.1"/>
</dbReference>
<dbReference type="RefSeq" id="XP_047279972.1">
    <molecule id="O75970-1"/>
    <property type="nucleotide sequence ID" value="XM_047424016.1"/>
</dbReference>
<dbReference type="RefSeq" id="XP_047279973.1">
    <molecule id="O75970-1"/>
    <property type="nucleotide sequence ID" value="XM_047424017.1"/>
</dbReference>
<dbReference type="RefSeq" id="XP_047279974.1">
    <molecule id="O75970-1"/>
    <property type="nucleotide sequence ID" value="XM_047424018.1"/>
</dbReference>
<dbReference type="RefSeq" id="XP_047279975.1">
    <molecule id="O75970-1"/>
    <property type="nucleotide sequence ID" value="XM_047424019.1"/>
</dbReference>
<dbReference type="RefSeq" id="XP_047279976.1">
    <molecule id="O75970-1"/>
    <property type="nucleotide sequence ID" value="XM_047424020.1"/>
</dbReference>
<dbReference type="RefSeq" id="XP_047279978.1">
    <molecule id="O75970-1"/>
    <property type="nucleotide sequence ID" value="XM_047424022.1"/>
</dbReference>
<dbReference type="RefSeq" id="XP_047279979.1">
    <molecule id="O75970-3"/>
    <property type="nucleotide sequence ID" value="XM_047424023.1"/>
</dbReference>
<dbReference type="RefSeq" id="XP_047279980.1">
    <molecule id="O75970-3"/>
    <property type="nucleotide sequence ID" value="XM_047424024.1"/>
</dbReference>
<dbReference type="RefSeq" id="XP_047279981.1">
    <molecule id="O75970-3"/>
    <property type="nucleotide sequence ID" value="XM_047424025.1"/>
</dbReference>
<dbReference type="RefSeq" id="XP_047279982.1">
    <molecule id="O75970-3"/>
    <property type="nucleotide sequence ID" value="XM_047424026.1"/>
</dbReference>
<dbReference type="RefSeq" id="XP_047279983.1">
    <molecule id="O75970-3"/>
    <property type="nucleotide sequence ID" value="XM_047424027.1"/>
</dbReference>
<dbReference type="RefSeq" id="XP_047279984.1">
    <molecule id="O75970-3"/>
    <property type="nucleotide sequence ID" value="XM_047424028.1"/>
</dbReference>
<dbReference type="RefSeq" id="XP_047279985.1">
    <molecule id="O75970-3"/>
    <property type="nucleotide sequence ID" value="XM_047424029.1"/>
</dbReference>
<dbReference type="RefSeq" id="XP_047279987.1">
    <molecule id="O75970-3"/>
    <property type="nucleotide sequence ID" value="XM_047424031.1"/>
</dbReference>
<dbReference type="RefSeq" id="XP_047279988.1">
    <molecule id="O75970-3"/>
    <property type="nucleotide sequence ID" value="XM_047424032.1"/>
</dbReference>
<dbReference type="RefSeq" id="XP_054184402.1">
    <molecule id="O75970-5"/>
    <property type="nucleotide sequence ID" value="XM_054328427.1"/>
</dbReference>
<dbReference type="RefSeq" id="XP_054220069.1">
    <molecule id="O75970-1"/>
    <property type="nucleotide sequence ID" value="XM_054364094.1"/>
</dbReference>
<dbReference type="RefSeq" id="XP_054220070.1">
    <molecule id="O75970-1"/>
    <property type="nucleotide sequence ID" value="XM_054364095.1"/>
</dbReference>
<dbReference type="RefSeq" id="XP_054220071.1">
    <molecule id="O75970-1"/>
    <property type="nucleotide sequence ID" value="XM_054364096.1"/>
</dbReference>
<dbReference type="RefSeq" id="XP_054220072.1">
    <molecule id="O75970-1"/>
    <property type="nucleotide sequence ID" value="XM_054364097.1"/>
</dbReference>
<dbReference type="RefSeq" id="XP_054220073.1">
    <molecule id="O75970-1"/>
    <property type="nucleotide sequence ID" value="XM_054364098.1"/>
</dbReference>
<dbReference type="RefSeq" id="XP_054220074.1">
    <molecule id="O75970-1"/>
    <property type="nucleotide sequence ID" value="XM_054364099.1"/>
</dbReference>
<dbReference type="RefSeq" id="XP_054220075.1">
    <molecule id="O75970-1"/>
    <property type="nucleotide sequence ID" value="XM_054364100.1"/>
</dbReference>
<dbReference type="RefSeq" id="XP_054220076.1">
    <molecule id="O75970-1"/>
    <property type="nucleotide sequence ID" value="XM_054364101.1"/>
</dbReference>
<dbReference type="RefSeq" id="XP_054220077.1">
    <molecule id="O75970-1"/>
    <property type="nucleotide sequence ID" value="XM_054364102.1"/>
</dbReference>
<dbReference type="RefSeq" id="XP_054220078.1">
    <molecule id="O75970-1"/>
    <property type="nucleotide sequence ID" value="XM_054364103.1"/>
</dbReference>
<dbReference type="RefSeq" id="XP_054220079.1">
    <molecule id="O75970-1"/>
    <property type="nucleotide sequence ID" value="XM_054364104.1"/>
</dbReference>
<dbReference type="RefSeq" id="XP_054220080.1">
    <molecule id="O75970-1"/>
    <property type="nucleotide sequence ID" value="XM_054364105.1"/>
</dbReference>
<dbReference type="RefSeq" id="XP_054220081.1">
    <molecule id="O75970-1"/>
    <property type="nucleotide sequence ID" value="XM_054364106.1"/>
</dbReference>
<dbReference type="RefSeq" id="XP_054220082.1">
    <molecule id="O75970-1"/>
    <property type="nucleotide sequence ID" value="XM_054364107.1"/>
</dbReference>
<dbReference type="RefSeq" id="XP_054220084.1">
    <molecule id="O75970-2"/>
    <property type="nucleotide sequence ID" value="XM_054364109.1"/>
</dbReference>
<dbReference type="RefSeq" id="XP_054220085.1">
    <molecule id="O75970-3"/>
    <property type="nucleotide sequence ID" value="XM_054364110.1"/>
</dbReference>
<dbReference type="RefSeq" id="XP_054220086.1">
    <molecule id="O75970-3"/>
    <property type="nucleotide sequence ID" value="XM_054364111.1"/>
</dbReference>
<dbReference type="RefSeq" id="XP_054220087.1">
    <molecule id="O75970-3"/>
    <property type="nucleotide sequence ID" value="XM_054364112.1"/>
</dbReference>
<dbReference type="RefSeq" id="XP_054220088.1">
    <molecule id="O75970-3"/>
    <property type="nucleotide sequence ID" value="XM_054364113.1"/>
</dbReference>
<dbReference type="RefSeq" id="XP_054220089.1">
    <molecule id="O75970-3"/>
    <property type="nucleotide sequence ID" value="XM_054364114.1"/>
</dbReference>
<dbReference type="RefSeq" id="XP_054220090.1">
    <molecule id="O75970-3"/>
    <property type="nucleotide sequence ID" value="XM_054364115.1"/>
</dbReference>
<dbReference type="RefSeq" id="XP_054220091.1">
    <molecule id="O75970-3"/>
    <property type="nucleotide sequence ID" value="XM_054364116.1"/>
</dbReference>
<dbReference type="RefSeq" id="XP_054220092.1">
    <molecule id="O75970-3"/>
    <property type="nucleotide sequence ID" value="XM_054364117.1"/>
</dbReference>
<dbReference type="RefSeq" id="XP_054220093.1">
    <molecule id="O75970-3"/>
    <property type="nucleotide sequence ID" value="XM_054364118.1"/>
</dbReference>
<dbReference type="RefSeq" id="XP_054220097.1">
    <molecule id="O75970-5"/>
    <property type="nucleotide sequence ID" value="XM_054364122.1"/>
</dbReference>
<dbReference type="RefSeq" id="XP_054220098.1">
    <molecule id="O75970-5"/>
    <property type="nucleotide sequence ID" value="XM_054364123.1"/>
</dbReference>
<dbReference type="PDB" id="2FCF">
    <property type="method" value="X-ray"/>
    <property type="resolution" value="1.76 A"/>
    <property type="chains" value="A=1148-1243"/>
</dbReference>
<dbReference type="PDB" id="2FNE">
    <property type="method" value="X-ray"/>
    <property type="resolution" value="1.83 A"/>
    <property type="chains" value="A/B/C=1983-2070"/>
</dbReference>
<dbReference type="PDB" id="2IWN">
    <property type="method" value="X-ray"/>
    <property type="resolution" value="1.35 A"/>
    <property type="chains" value="A=373-463"/>
</dbReference>
<dbReference type="PDB" id="2IWO">
    <property type="method" value="X-ray"/>
    <property type="resolution" value="1.70 A"/>
    <property type="chains" value="A/B=1859-1951"/>
</dbReference>
<dbReference type="PDB" id="2IWP">
    <property type="method" value="X-ray"/>
    <property type="resolution" value="2.15 A"/>
    <property type="chains" value="A/B=1859-1951"/>
</dbReference>
<dbReference type="PDB" id="2IWQ">
    <property type="method" value="X-ray"/>
    <property type="resolution" value="1.80 A"/>
    <property type="chains" value="A=1148-1243"/>
</dbReference>
<dbReference type="PDB" id="2O2T">
    <property type="method" value="X-ray"/>
    <property type="resolution" value="2.70 A"/>
    <property type="chains" value="A/B=117-227"/>
</dbReference>
<dbReference type="PDB" id="2OPG">
    <property type="method" value="X-ray"/>
    <property type="resolution" value="1.50 A"/>
    <property type="chains" value="A/B=1625-1716"/>
</dbReference>
<dbReference type="PDB" id="2QG1">
    <property type="method" value="X-ray"/>
    <property type="resolution" value="1.40 A"/>
    <property type="chains" value="A=1722-1806"/>
</dbReference>
<dbReference type="PDBsum" id="2FCF"/>
<dbReference type="PDBsum" id="2FNE"/>
<dbReference type="PDBsum" id="2IWN"/>
<dbReference type="PDBsum" id="2IWO"/>
<dbReference type="PDBsum" id="2IWP"/>
<dbReference type="PDBsum" id="2IWQ"/>
<dbReference type="PDBsum" id="2O2T"/>
<dbReference type="PDBsum" id="2OPG"/>
<dbReference type="PDBsum" id="2QG1"/>
<dbReference type="SMR" id="O75970"/>
<dbReference type="BioGRID" id="114307">
    <property type="interactions" value="102"/>
</dbReference>
<dbReference type="CORUM" id="O75970"/>
<dbReference type="ELM" id="O75970"/>
<dbReference type="FunCoup" id="O75970">
    <property type="interactions" value="804"/>
</dbReference>
<dbReference type="IntAct" id="O75970">
    <property type="interactions" value="81"/>
</dbReference>
<dbReference type="MINT" id="O75970"/>
<dbReference type="STRING" id="9606.ENSP00000320006"/>
<dbReference type="GlyGen" id="O75970">
    <property type="glycosylation" value="4 sites, 4 N-linked glycans (2 sites), 1 O-linked glycan (1 site)"/>
</dbReference>
<dbReference type="iPTMnet" id="O75970"/>
<dbReference type="PhosphoSitePlus" id="O75970"/>
<dbReference type="BioMuta" id="MPDZ"/>
<dbReference type="jPOST" id="O75970"/>
<dbReference type="MassIVE" id="O75970"/>
<dbReference type="PaxDb" id="9606-ENSP00000439807"/>
<dbReference type="PeptideAtlas" id="O75970"/>
<dbReference type="ProteomicsDB" id="50330">
    <molecule id="O75970-1"/>
</dbReference>
<dbReference type="ProteomicsDB" id="50331">
    <molecule id="O75970-2"/>
</dbReference>
<dbReference type="ProteomicsDB" id="50332">
    <molecule id="O75970-3"/>
</dbReference>
<dbReference type="ProteomicsDB" id="7263"/>
<dbReference type="Pumba" id="O75970"/>
<dbReference type="Antibodypedia" id="4615">
    <property type="antibodies" value="86 antibodies from 19 providers"/>
</dbReference>
<dbReference type="DNASU" id="8777"/>
<dbReference type="Ensembl" id="ENST00000319217.12">
    <molecule id="O75970-1"/>
    <property type="protein sequence ID" value="ENSP00000320006.7"/>
    <property type="gene ID" value="ENSG00000107186.17"/>
</dbReference>
<dbReference type="Ensembl" id="ENST00000447879.6">
    <molecule id="O75970-3"/>
    <property type="protein sequence ID" value="ENSP00000415208.1"/>
    <property type="gene ID" value="ENSG00000107186.17"/>
</dbReference>
<dbReference type="Ensembl" id="ENST00000536827.5">
    <molecule id="O75970-5"/>
    <property type="protein sequence ID" value="ENSP00000444151.1"/>
    <property type="gene ID" value="ENSG00000107186.17"/>
</dbReference>
<dbReference type="Ensembl" id="ENST00000541718.5">
    <molecule id="O75970-2"/>
    <property type="protein sequence ID" value="ENSP00000439807.1"/>
    <property type="gene ID" value="ENSG00000107186.17"/>
</dbReference>
<dbReference type="GeneID" id="8777"/>
<dbReference type="KEGG" id="hsa:8777"/>
<dbReference type="MANE-Select" id="ENST00000319217.12">
    <property type="protein sequence ID" value="ENSP00000320006.7"/>
    <property type="RefSeq nucleotide sequence ID" value="NM_001378778.1"/>
    <property type="RefSeq protein sequence ID" value="NP_001365707.1"/>
</dbReference>
<dbReference type="UCSC" id="uc003zlb.5">
    <molecule id="O75970-1"/>
    <property type="organism name" value="human"/>
</dbReference>
<dbReference type="AGR" id="HGNC:7208"/>
<dbReference type="CTD" id="8777"/>
<dbReference type="DisGeNET" id="8777"/>
<dbReference type="GeneCards" id="MPDZ"/>
<dbReference type="HGNC" id="HGNC:7208">
    <property type="gene designation" value="MPDZ"/>
</dbReference>
<dbReference type="HPA" id="ENSG00000107186">
    <property type="expression patterns" value="Tissue enhanced (liver)"/>
</dbReference>
<dbReference type="MalaCards" id="MPDZ"/>
<dbReference type="MIM" id="603785">
    <property type="type" value="gene"/>
</dbReference>
<dbReference type="MIM" id="615219">
    <property type="type" value="phenotype"/>
</dbReference>
<dbReference type="neXtProt" id="NX_O75970"/>
<dbReference type="OpenTargets" id="ENSG00000107186"/>
<dbReference type="Orphanet" id="269505">
    <property type="disease" value="Congenital communicating hydrocephalus"/>
</dbReference>
<dbReference type="PharmGKB" id="PA30914"/>
<dbReference type="VEuPathDB" id="HostDB:ENSG00000107186"/>
<dbReference type="eggNOG" id="KOG3528">
    <property type="taxonomic scope" value="Eukaryota"/>
</dbReference>
<dbReference type="GeneTree" id="ENSGT00940000155586"/>
<dbReference type="HOGENOM" id="CLU_002378_0_0_1"/>
<dbReference type="InParanoid" id="O75970"/>
<dbReference type="OMA" id="LEHMSHA"/>
<dbReference type="OrthoDB" id="6022711at2759"/>
<dbReference type="PAN-GO" id="O75970">
    <property type="GO annotations" value="7 GO annotations based on evolutionary models"/>
</dbReference>
<dbReference type="PhylomeDB" id="O75970"/>
<dbReference type="TreeFam" id="TF330709"/>
<dbReference type="PathwayCommons" id="O75970"/>
<dbReference type="SignaLink" id="O75970"/>
<dbReference type="BioGRID-ORCS" id="8777">
    <property type="hits" value="12 hits in 1161 CRISPR screens"/>
</dbReference>
<dbReference type="ChiTaRS" id="MPDZ">
    <property type="organism name" value="human"/>
</dbReference>
<dbReference type="EvolutionaryTrace" id="O75970"/>
<dbReference type="GeneWiki" id="MPDZ"/>
<dbReference type="GenomeRNAi" id="8777"/>
<dbReference type="Pharos" id="O75970">
    <property type="development level" value="Tbio"/>
</dbReference>
<dbReference type="PRO" id="PR:O75970"/>
<dbReference type="Proteomes" id="UP000005640">
    <property type="component" value="Chromosome 9"/>
</dbReference>
<dbReference type="RNAct" id="O75970">
    <property type="molecule type" value="protein"/>
</dbReference>
<dbReference type="Bgee" id="ENSG00000107186">
    <property type="expression patterns" value="Expressed in calcaneal tendon and 193 other cell types or tissues"/>
</dbReference>
<dbReference type="ExpressionAtlas" id="O75970">
    <property type="expression patterns" value="baseline and differential"/>
</dbReference>
<dbReference type="GO" id="GO:0045177">
    <property type="term" value="C:apical part of cell"/>
    <property type="evidence" value="ECO:0000318"/>
    <property type="project" value="GO_Central"/>
</dbReference>
<dbReference type="GO" id="GO:0016324">
    <property type="term" value="C:apical plasma membrane"/>
    <property type="evidence" value="ECO:0007669"/>
    <property type="project" value="UniProtKB-SubCell"/>
</dbReference>
<dbReference type="GO" id="GO:0016327">
    <property type="term" value="C:apicolateral plasma membrane"/>
    <property type="evidence" value="ECO:0000314"/>
    <property type="project" value="UniProtKB"/>
</dbReference>
<dbReference type="GO" id="GO:0005923">
    <property type="term" value="C:bicellular tight junction"/>
    <property type="evidence" value="ECO:0000318"/>
    <property type="project" value="GO_Central"/>
</dbReference>
<dbReference type="GO" id="GO:0005737">
    <property type="term" value="C:cytoplasm"/>
    <property type="evidence" value="ECO:0000314"/>
    <property type="project" value="UniProtKB"/>
</dbReference>
<dbReference type="GO" id="GO:0030425">
    <property type="term" value="C:dendrite"/>
    <property type="evidence" value="ECO:0007669"/>
    <property type="project" value="UniProtKB-SubCell"/>
</dbReference>
<dbReference type="GO" id="GO:0005886">
    <property type="term" value="C:plasma membrane"/>
    <property type="evidence" value="ECO:0000318"/>
    <property type="project" value="GO_Central"/>
</dbReference>
<dbReference type="GO" id="GO:0014069">
    <property type="term" value="C:postsynaptic density"/>
    <property type="evidence" value="ECO:0007669"/>
    <property type="project" value="UniProtKB-SubCell"/>
</dbReference>
<dbReference type="GO" id="GO:0120192">
    <property type="term" value="P:tight junction assembly"/>
    <property type="evidence" value="ECO:0000318"/>
    <property type="project" value="GO_Central"/>
</dbReference>
<dbReference type="CDD" id="cd06673">
    <property type="entry name" value="PDZ10_MUPP1-PDZ8_PATJ-like"/>
    <property type="match status" value="1"/>
</dbReference>
<dbReference type="CDD" id="cd06674">
    <property type="entry name" value="PDZ11_MUPP1-PDZ9_PATJ-like"/>
    <property type="match status" value="1"/>
</dbReference>
<dbReference type="CDD" id="cd06675">
    <property type="entry name" value="PDZ12_MUPP1-like"/>
    <property type="match status" value="1"/>
</dbReference>
<dbReference type="CDD" id="cd06676">
    <property type="entry name" value="PDZ13_MUPP1-like"/>
    <property type="match status" value="1"/>
</dbReference>
<dbReference type="CDD" id="cd06689">
    <property type="entry name" value="PDZ1_MUPP1-like"/>
    <property type="match status" value="1"/>
</dbReference>
<dbReference type="CDD" id="cd06667">
    <property type="entry name" value="PDZ2_MUPP1-like"/>
    <property type="match status" value="1"/>
</dbReference>
<dbReference type="CDD" id="cd06791">
    <property type="entry name" value="PDZ3_MUPP1-like"/>
    <property type="match status" value="1"/>
</dbReference>
<dbReference type="CDD" id="cd06668">
    <property type="entry name" value="PDZ4_MUPP1-like"/>
    <property type="match status" value="1"/>
</dbReference>
<dbReference type="CDD" id="cd06669">
    <property type="entry name" value="PDZ5_MUPP1-like"/>
    <property type="match status" value="1"/>
</dbReference>
<dbReference type="CDD" id="cd06670">
    <property type="entry name" value="PDZ6_MUPP1-like"/>
    <property type="match status" value="1"/>
</dbReference>
<dbReference type="CDD" id="cd06671">
    <property type="entry name" value="PDZ7_MUPP1-PD6_PATJ-like"/>
    <property type="match status" value="1"/>
</dbReference>
<dbReference type="CDD" id="cd06672">
    <property type="entry name" value="PDZ8_MUPP1-PDZ7_PATJ-PDZ2_INAD-like"/>
    <property type="match status" value="1"/>
</dbReference>
<dbReference type="CDD" id="cd10817">
    <property type="entry name" value="PDZ9_MUPP1-like"/>
    <property type="match status" value="1"/>
</dbReference>
<dbReference type="FunFam" id="2.30.42.10:FF:000140">
    <property type="entry name" value="Multiple PDZ domain crumbs cell polarity complex component"/>
    <property type="match status" value="1"/>
</dbReference>
<dbReference type="FunFam" id="2.30.42.10:FF:000070">
    <property type="entry name" value="Multiple PDZ domain protein"/>
    <property type="match status" value="1"/>
</dbReference>
<dbReference type="FunFam" id="2.30.42.10:FF:000038">
    <property type="entry name" value="Multiple PDZ domain protein isoform X1"/>
    <property type="match status" value="1"/>
</dbReference>
<dbReference type="FunFam" id="2.30.42.10:FF:000044">
    <property type="entry name" value="Multiple PDZ domain protein isoform X1"/>
    <property type="match status" value="1"/>
</dbReference>
<dbReference type="FunFam" id="2.30.42.10:FF:000051">
    <property type="entry name" value="Multiple PDZ domain protein isoform X1"/>
    <property type="match status" value="1"/>
</dbReference>
<dbReference type="FunFam" id="2.30.42.10:FF:000108">
    <property type="entry name" value="Multiple PDZ domain protein isoform X1"/>
    <property type="match status" value="1"/>
</dbReference>
<dbReference type="FunFam" id="2.30.42.10:FF:000054">
    <property type="entry name" value="multiple PDZ domain protein isoform X1"/>
    <property type="match status" value="1"/>
</dbReference>
<dbReference type="FunFam" id="2.30.42.10:FF:000057">
    <property type="entry name" value="multiple PDZ domain protein isoform X1"/>
    <property type="match status" value="1"/>
</dbReference>
<dbReference type="FunFam" id="2.30.42.10:FF:000058">
    <property type="entry name" value="multiple PDZ domain protein isoform X1"/>
    <property type="match status" value="1"/>
</dbReference>
<dbReference type="FunFam" id="2.30.42.10:FF:000072">
    <property type="entry name" value="multiple PDZ domain protein isoform X1"/>
    <property type="match status" value="1"/>
</dbReference>
<dbReference type="FunFam" id="2.30.42.10:FF:000089">
    <property type="entry name" value="multiple PDZ domain protein isoform X1"/>
    <property type="match status" value="1"/>
</dbReference>
<dbReference type="FunFam" id="2.30.42.10:FF:000093">
    <property type="entry name" value="multiple PDZ domain protein isoform X1"/>
    <property type="match status" value="1"/>
</dbReference>
<dbReference type="FunFam" id="2.30.42.10:FF:000110">
    <property type="entry name" value="multiple PDZ domain protein isoform X2"/>
    <property type="match status" value="1"/>
</dbReference>
<dbReference type="Gene3D" id="2.30.42.10">
    <property type="match status" value="13"/>
</dbReference>
<dbReference type="Gene3D" id="1.10.287.650">
    <property type="entry name" value="L27 domain"/>
    <property type="match status" value="1"/>
</dbReference>
<dbReference type="InterPro" id="IPR015132">
    <property type="entry name" value="L27_2"/>
</dbReference>
<dbReference type="InterPro" id="IPR004172">
    <property type="entry name" value="L27_dom"/>
</dbReference>
<dbReference type="InterPro" id="IPR036892">
    <property type="entry name" value="L27_dom_sf"/>
</dbReference>
<dbReference type="InterPro" id="IPR032078">
    <property type="entry name" value="MPDZ_u10"/>
</dbReference>
<dbReference type="InterPro" id="IPR001478">
    <property type="entry name" value="PDZ"/>
</dbReference>
<dbReference type="InterPro" id="IPR051342">
    <property type="entry name" value="PDZ_scaffold"/>
</dbReference>
<dbReference type="InterPro" id="IPR036034">
    <property type="entry name" value="PDZ_sf"/>
</dbReference>
<dbReference type="PANTHER" id="PTHR19964">
    <property type="entry name" value="MULTIPLE PDZ DOMAIN PROTEIN"/>
    <property type="match status" value="1"/>
</dbReference>
<dbReference type="PANTHER" id="PTHR19964:SF97">
    <property type="entry name" value="PDZ DOMAIN-CONTAINING PROTEIN"/>
    <property type="match status" value="1"/>
</dbReference>
<dbReference type="Pfam" id="PF09045">
    <property type="entry name" value="L27_2"/>
    <property type="match status" value="1"/>
</dbReference>
<dbReference type="Pfam" id="PF16667">
    <property type="entry name" value="MPDZ_u10"/>
    <property type="match status" value="1"/>
</dbReference>
<dbReference type="Pfam" id="PF00595">
    <property type="entry name" value="PDZ"/>
    <property type="match status" value="13"/>
</dbReference>
<dbReference type="SMART" id="SM00228">
    <property type="entry name" value="PDZ"/>
    <property type="match status" value="13"/>
</dbReference>
<dbReference type="SUPFAM" id="SSF101288">
    <property type="entry name" value="L27 domain"/>
    <property type="match status" value="1"/>
</dbReference>
<dbReference type="SUPFAM" id="SSF50156">
    <property type="entry name" value="PDZ domain-like"/>
    <property type="match status" value="13"/>
</dbReference>
<dbReference type="PROSITE" id="PS51022">
    <property type="entry name" value="L27"/>
    <property type="match status" value="1"/>
</dbReference>
<dbReference type="PROSITE" id="PS50106">
    <property type="entry name" value="PDZ"/>
    <property type="match status" value="13"/>
</dbReference>
<name>MPDZ_HUMAN</name>
<comment type="function">
    <text evidence="2 8 10">Member of the NMDAR signaling complex that may play a role in control of AMPAR potentiation and synaptic plasticity in excitatory synapses (PubMed:11150294, PubMed:15312654). Promotes clustering of HT2RC at the cell surface (By similarity).</text>
</comment>
<comment type="subunit">
    <text evidence="1 3 8 9 10 11 12 15">Interacts with CLDN5, DLG4, GRIN1, F11R/JAM, CLDN1, NG2, CRB1, MPP4 and PALS1 (By similarity). Interacts with HTR2A, HTR2B, HTR2C, PLEKHA1/TAPP1, PLEKHA2/TAPP2, CXADR, SYNGAP1, CAMK2A and CAMK2B. Interacts with FAT4 (via cytoplasmic domain) (By similarity). Interacts with DLL1 (By similarity).</text>
</comment>
<comment type="subunit">
    <text evidence="7">(Microbial infection) Interacts with human adenovirus type 9 E4-ORF1 protein.</text>
</comment>
<comment type="subunit">
    <text evidence="7">(Microbial infection) Interacts with human papillomavirus 18/HPV18 protein E6.</text>
</comment>
<comment type="interaction">
    <interactant intactId="EBI-821405">
        <id>O75970</id>
    </interactant>
    <interactant intactId="EBI-7590304">
        <id>Q9H205</id>
        <label>OR2AG1</label>
    </interactant>
    <organismsDiffer>false</organismsDiffer>
    <experiments>8</experiments>
</comment>
<comment type="interaction">
    <interactant intactId="EBI-821405">
        <id>O75970</id>
    </interactant>
    <interactant intactId="EBI-2652984">
        <id>Q9HB21</id>
        <label>PLEKHA1</label>
    </interactant>
    <organismsDiffer>false</organismsDiffer>
    <experiments>6</experiments>
</comment>
<comment type="interaction">
    <interactant intactId="EBI-821405">
        <id>O75970</id>
    </interactant>
    <interactant intactId="EBI-6266935">
        <id>P32745</id>
        <label>SSTR3</label>
    </interactant>
    <organismsDiffer>false</organismsDiffer>
    <experiments>5</experiments>
</comment>
<comment type="interaction">
    <interactant intactId="EBI-821405">
        <id>O75970</id>
    </interactant>
    <interactant intactId="EBI-366083">
        <id>P04637</id>
        <label>TP53</label>
    </interactant>
    <organismsDiffer>false</organismsDiffer>
    <experiments>3</experiments>
</comment>
<comment type="interaction">
    <interactant intactId="EBI-821405">
        <id>O75970</id>
    </interactant>
    <interactant intactId="EBI-8079166">
        <id>Q9ERS5</id>
        <label>Plekha2</label>
    </interactant>
    <organismsDiffer>true</organismsDiffer>
    <experiments>5</experiments>
</comment>
<comment type="subcellular location">
    <subcellularLocation>
        <location>Cell membrane</location>
        <topology>Peripheral membrane protein</topology>
        <orientation>Cytoplasmic side</orientation>
    </subcellularLocation>
    <subcellularLocation>
        <location>Apical cell membrane</location>
        <topology>Peripheral membrane protein</topology>
        <orientation>Cytoplasmic side</orientation>
    </subcellularLocation>
    <subcellularLocation>
        <location>Postsynaptic density</location>
    </subcellularLocation>
    <subcellularLocation>
        <location>Cell projection</location>
        <location>Dendrite</location>
    </subcellularLocation>
    <subcellularLocation>
        <location>Cell junction</location>
        <location>Tight junction</location>
    </subcellularLocation>
    <subcellularLocation>
        <location>Synapse</location>
    </subcellularLocation>
    <subcellularLocation>
        <location>Synapse</location>
        <location>Synaptosome</location>
    </subcellularLocation>
    <text evidence="1 2">Colocalizes with HTR2C on the apical membrane of epithelial choroid plexus cells (By similarity). Highly enriched in postsynaptic densities (PSD). Localized to punctae on dendrites of hippocampal neurons and colocalizes with the synaptic marker DLG4. Localized mainly in the Schmidt-Lanterman incisures of myelinating Schwann cells (By similarity). In the retina, localizes to the sub-apical region adjacent to the adherens junction complex at the outer limiting membrane. Enriched at the tight junctions of epithelial cells. Association to the tight junctions depends on CXADR.</text>
</comment>
<comment type="alternative products">
    <event type="alternative splicing"/>
    <isoform>
        <id>O75970-1</id>
        <name>1</name>
        <sequence type="displayed"/>
    </isoform>
    <isoform>
        <id>O75970-2</id>
        <name>2</name>
        <sequence type="described" ref="VSP_040451"/>
    </isoform>
    <isoform>
        <id>O75970-3</id>
        <name>3</name>
        <sequence type="described" ref="VSP_040450"/>
    </isoform>
    <isoform>
        <id>O75970-5</id>
        <name>4</name>
        <sequence type="described" ref="VSP_040450 VSP_040451"/>
    </isoform>
</comment>
<comment type="tissue specificity">
    <text evidence="15">Expressed in heart, brain, placenta, liver, skeletal muscle, kidney and pancreas.</text>
</comment>
<comment type="domain">
    <text evidence="1 8 9 10">The PDZ domain 1 binds NG2. The PDZ domains 7 and 10 bind the Ad9 E4-ORF1 oncoprotein. The PDZ domain 9 binds F11R. The PDZ domain 10 binds the C-terminus of CLDN1 and KIT and the C-terminal PDZ-binding motif of HTR2C. The PDZ domain 13 binds CXADR (By similarity). The PDZ domain 2 binds CAMK2A and CAMK2B. The PDZ domains 10 and 13 bind PLEKHA1 and PLEKHA2. The PDZ domain 13 binds SYNGAP1.</text>
</comment>
<comment type="disease" evidence="13 14">
    <disease id="DI-03725">
        <name>Hydrocephalus, congenital, 2, with or without brain or eye anomalies</name>
        <acronym>HYC2</acronym>
        <description>A form of congenital hydrocephalus, a disease characterized by onset in utero of enlarged ventricles due to accumulation of ventricular cerebrospinal fluid. HYC2 affected individuals have variable neurologic impairment. Some individuals have other brain abnormalities, including lissencephaly, thinning of the corpus callosum, and neuronal heterotopia. Most patients have delayed motor development and some have delayed intellectual development and/or seizures. Additional congenital features, including cardiac septal defects, iris coloboma, and non-specific dysmorphic features, may be observed. HYC2 inheritance is autosomal recessive.</description>
        <dbReference type="MIM" id="615219"/>
    </disease>
    <text>The disease is caused by variants affecting the gene represented in this entry.</text>
</comment>
<comment type="sequence caution" evidence="18">
    <conflict type="miscellaneous discrepancy">
        <sequence resource="EMBL-CDS" id="AAC61870"/>
    </conflict>
    <text>Aberrant splicing.</text>
</comment>
<comment type="sequence caution" evidence="18">
    <conflict type="erroneous initiation">
        <sequence resource="EMBL-CDS" id="BAC05409"/>
    </conflict>
    <text>Truncated N-terminus.</text>
</comment>
<comment type="sequence caution" evidence="18">
    <conflict type="erroneous initiation">
        <sequence resource="EMBL-CDS" id="BAE06123"/>
    </conflict>
    <text>Extended N-terminus.</text>
</comment>
<comment type="sequence caution" evidence="18">
    <conflict type="miscellaneous discrepancy">
        <sequence resource="EMBL-CDS" id="CAI56786"/>
    </conflict>
    <text>Aberrant splicing.</text>
</comment>
<reference key="1">
    <citation type="submission" date="1998-09" db="EMBL/GenBank/DDBJ databases">
        <title>Human homolog of MUPP1 protein.</title>
        <authorList>
            <person name="Eng L."/>
            <person name="Krapivinsky G."/>
            <person name="Clapham D.E."/>
        </authorList>
    </citation>
    <scope>NUCLEOTIDE SEQUENCE [MRNA] (ISOFORM 1)</scope>
    <source>
        <tissue>Brain</tissue>
    </source>
</reference>
<reference key="2">
    <citation type="submission" date="2005-03" db="EMBL/GenBank/DDBJ databases">
        <title>Preparation of a set of expression-ready clones of mammalian long cDNAs encoding large proteins by the ORF trap cloning method.</title>
        <authorList>
            <person name="Nakajima D."/>
            <person name="Saito K."/>
            <person name="Yamakawa H."/>
            <person name="Kikuno R.F."/>
            <person name="Nakayama M."/>
            <person name="Ohara R."/>
            <person name="Okazaki N."/>
            <person name="Koga H."/>
            <person name="Nagase T."/>
            <person name="Ohara O."/>
        </authorList>
    </citation>
    <scope>NUCLEOTIDE SEQUENCE [LARGE SCALE MRNA] (ISOFORM 2)</scope>
    <source>
        <tissue>Brain</tissue>
    </source>
</reference>
<reference key="3">
    <citation type="journal article" date="2004" name="Nature">
        <title>DNA sequence and analysis of human chromosome 9.</title>
        <authorList>
            <person name="Humphray S.J."/>
            <person name="Oliver K."/>
            <person name="Hunt A.R."/>
            <person name="Plumb R.W."/>
            <person name="Loveland J.E."/>
            <person name="Howe K.L."/>
            <person name="Andrews T.D."/>
            <person name="Searle S."/>
            <person name="Hunt S.E."/>
            <person name="Scott C.E."/>
            <person name="Jones M.C."/>
            <person name="Ainscough R."/>
            <person name="Almeida J.P."/>
            <person name="Ambrose K.D."/>
            <person name="Ashwell R.I.S."/>
            <person name="Babbage A.K."/>
            <person name="Babbage S."/>
            <person name="Bagguley C.L."/>
            <person name="Bailey J."/>
            <person name="Banerjee R."/>
            <person name="Barker D.J."/>
            <person name="Barlow K.F."/>
            <person name="Bates K."/>
            <person name="Beasley H."/>
            <person name="Beasley O."/>
            <person name="Bird C.P."/>
            <person name="Bray-Allen S."/>
            <person name="Brown A.J."/>
            <person name="Brown J.Y."/>
            <person name="Burford D."/>
            <person name="Burrill W."/>
            <person name="Burton J."/>
            <person name="Carder C."/>
            <person name="Carter N.P."/>
            <person name="Chapman J.C."/>
            <person name="Chen Y."/>
            <person name="Clarke G."/>
            <person name="Clark S.Y."/>
            <person name="Clee C.M."/>
            <person name="Clegg S."/>
            <person name="Collier R.E."/>
            <person name="Corby N."/>
            <person name="Crosier M."/>
            <person name="Cummings A.T."/>
            <person name="Davies J."/>
            <person name="Dhami P."/>
            <person name="Dunn M."/>
            <person name="Dutta I."/>
            <person name="Dyer L.W."/>
            <person name="Earthrowl M.E."/>
            <person name="Faulkner L."/>
            <person name="Fleming C.J."/>
            <person name="Frankish A."/>
            <person name="Frankland J.A."/>
            <person name="French L."/>
            <person name="Fricker D.G."/>
            <person name="Garner P."/>
            <person name="Garnett J."/>
            <person name="Ghori J."/>
            <person name="Gilbert J.G.R."/>
            <person name="Glison C."/>
            <person name="Grafham D.V."/>
            <person name="Gribble S."/>
            <person name="Griffiths C."/>
            <person name="Griffiths-Jones S."/>
            <person name="Grocock R."/>
            <person name="Guy J."/>
            <person name="Hall R.E."/>
            <person name="Hammond S."/>
            <person name="Harley J.L."/>
            <person name="Harrison E.S.I."/>
            <person name="Hart E.A."/>
            <person name="Heath P.D."/>
            <person name="Henderson C.D."/>
            <person name="Hopkins B.L."/>
            <person name="Howard P.J."/>
            <person name="Howden P.J."/>
            <person name="Huckle E."/>
            <person name="Johnson C."/>
            <person name="Johnson D."/>
            <person name="Joy A.A."/>
            <person name="Kay M."/>
            <person name="Keenan S."/>
            <person name="Kershaw J.K."/>
            <person name="Kimberley A.M."/>
            <person name="King A."/>
            <person name="Knights A."/>
            <person name="Laird G.K."/>
            <person name="Langford C."/>
            <person name="Lawlor S."/>
            <person name="Leongamornlert D.A."/>
            <person name="Leversha M."/>
            <person name="Lloyd C."/>
            <person name="Lloyd D.M."/>
            <person name="Lovell J."/>
            <person name="Martin S."/>
            <person name="Mashreghi-Mohammadi M."/>
            <person name="Matthews L."/>
            <person name="McLaren S."/>
            <person name="McLay K.E."/>
            <person name="McMurray A."/>
            <person name="Milne S."/>
            <person name="Nickerson T."/>
            <person name="Nisbett J."/>
            <person name="Nordsiek G."/>
            <person name="Pearce A.V."/>
            <person name="Peck A.I."/>
            <person name="Porter K.M."/>
            <person name="Pandian R."/>
            <person name="Pelan S."/>
            <person name="Phillimore B."/>
            <person name="Povey S."/>
            <person name="Ramsey Y."/>
            <person name="Rand V."/>
            <person name="Scharfe M."/>
            <person name="Sehra H.K."/>
            <person name="Shownkeen R."/>
            <person name="Sims S.K."/>
            <person name="Skuce C.D."/>
            <person name="Smith M."/>
            <person name="Steward C.A."/>
            <person name="Swarbreck D."/>
            <person name="Sycamore N."/>
            <person name="Tester J."/>
            <person name="Thorpe A."/>
            <person name="Tracey A."/>
            <person name="Tromans A."/>
            <person name="Thomas D.W."/>
            <person name="Wall M."/>
            <person name="Wallis J.M."/>
            <person name="West A.P."/>
            <person name="Whitehead S.L."/>
            <person name="Willey D.L."/>
            <person name="Williams S.A."/>
            <person name="Wilming L."/>
            <person name="Wray P.W."/>
            <person name="Young L."/>
            <person name="Ashurst J.L."/>
            <person name="Coulson A."/>
            <person name="Blocker H."/>
            <person name="Durbin R.M."/>
            <person name="Sulston J.E."/>
            <person name="Hubbard T."/>
            <person name="Jackson M.J."/>
            <person name="Bentley D.R."/>
            <person name="Beck S."/>
            <person name="Rogers J."/>
            <person name="Dunham I."/>
        </authorList>
    </citation>
    <scope>NUCLEOTIDE SEQUENCE [LARGE SCALE GENOMIC DNA]</scope>
</reference>
<reference key="4">
    <citation type="submission" date="2005-09" db="EMBL/GenBank/DDBJ databases">
        <authorList>
            <person name="Mural R.J."/>
            <person name="Istrail S."/>
            <person name="Sutton G.G."/>
            <person name="Florea L."/>
            <person name="Halpern A.L."/>
            <person name="Mobarry C.M."/>
            <person name="Lippert R."/>
            <person name="Walenz B."/>
            <person name="Shatkay H."/>
            <person name="Dew I."/>
            <person name="Miller J.R."/>
            <person name="Flanigan M.J."/>
            <person name="Edwards N.J."/>
            <person name="Bolanos R."/>
            <person name="Fasulo D."/>
            <person name="Halldorsson B.V."/>
            <person name="Hannenhalli S."/>
            <person name="Turner R."/>
            <person name="Yooseph S."/>
            <person name="Lu F."/>
            <person name="Nusskern D.R."/>
            <person name="Shue B.C."/>
            <person name="Zheng X.H."/>
            <person name="Zhong F."/>
            <person name="Delcher A.L."/>
            <person name="Huson D.H."/>
            <person name="Kravitz S.A."/>
            <person name="Mouchard L."/>
            <person name="Reinert K."/>
            <person name="Remington K.A."/>
            <person name="Clark A.G."/>
            <person name="Waterman M.S."/>
            <person name="Eichler E.E."/>
            <person name="Adams M.D."/>
            <person name="Hunkapiller M.W."/>
            <person name="Myers E.W."/>
            <person name="Venter J.C."/>
        </authorList>
    </citation>
    <scope>NUCLEOTIDE SEQUENCE [LARGE SCALE GENOMIC DNA]</scope>
</reference>
<reference key="5">
    <citation type="journal article" date="2004" name="Genome Res.">
        <title>The status, quality, and expansion of the NIH full-length cDNA project: the Mammalian Gene Collection (MGC).</title>
        <authorList>
            <consortium name="The MGC Project Team"/>
        </authorList>
    </citation>
    <scope>NUCLEOTIDE SEQUENCE [LARGE SCALE MRNA] (ISOFORMS 3 AND 4)</scope>
</reference>
<reference key="6">
    <citation type="journal article" date="2007" name="BMC Genomics">
        <title>The full-ORF clone resource of the German cDNA consortium.</title>
        <authorList>
            <person name="Bechtel S."/>
            <person name="Rosenfelder H."/>
            <person name="Duda A."/>
            <person name="Schmidt C.P."/>
            <person name="Ernst U."/>
            <person name="Wellenreuther R."/>
            <person name="Mehrle A."/>
            <person name="Schuster C."/>
            <person name="Bahr A."/>
            <person name="Bloecker H."/>
            <person name="Heubner D."/>
            <person name="Hoerlein A."/>
            <person name="Michel G."/>
            <person name="Wedler H."/>
            <person name="Koehrer K."/>
            <person name="Ottenwaelder B."/>
            <person name="Poustka A."/>
            <person name="Wiemann S."/>
            <person name="Schupp I."/>
        </authorList>
    </citation>
    <scope>NUCLEOTIDE SEQUENCE [LARGE SCALE MRNA] OF 573-2070 (ISOFORM 1)</scope>
    <source>
        <tissue>Amygdala</tissue>
    </source>
</reference>
<reference key="7">
    <citation type="journal article" date="2004" name="Nat. Genet.">
        <title>Complete sequencing and characterization of 21,243 full-length human cDNAs.</title>
        <authorList>
            <person name="Ota T."/>
            <person name="Suzuki Y."/>
            <person name="Nishikawa T."/>
            <person name="Otsuki T."/>
            <person name="Sugiyama T."/>
            <person name="Irie R."/>
            <person name="Wakamatsu A."/>
            <person name="Hayashi K."/>
            <person name="Sato H."/>
            <person name="Nagai K."/>
            <person name="Kimura K."/>
            <person name="Makita H."/>
            <person name="Sekine M."/>
            <person name="Obayashi M."/>
            <person name="Nishi T."/>
            <person name="Shibahara T."/>
            <person name="Tanaka T."/>
            <person name="Ishii S."/>
            <person name="Yamamoto J."/>
            <person name="Saito K."/>
            <person name="Kawai Y."/>
            <person name="Isono Y."/>
            <person name="Nakamura Y."/>
            <person name="Nagahari K."/>
            <person name="Murakami K."/>
            <person name="Yasuda T."/>
            <person name="Iwayanagi T."/>
            <person name="Wagatsuma M."/>
            <person name="Shiratori A."/>
            <person name="Sudo H."/>
            <person name="Hosoiri T."/>
            <person name="Kaku Y."/>
            <person name="Kodaira H."/>
            <person name="Kondo H."/>
            <person name="Sugawara M."/>
            <person name="Takahashi M."/>
            <person name="Kanda K."/>
            <person name="Yokoi T."/>
            <person name="Furuya T."/>
            <person name="Kikkawa E."/>
            <person name="Omura Y."/>
            <person name="Abe K."/>
            <person name="Kamihara K."/>
            <person name="Katsuta N."/>
            <person name="Sato K."/>
            <person name="Tanikawa M."/>
            <person name="Yamazaki M."/>
            <person name="Ninomiya K."/>
            <person name="Ishibashi T."/>
            <person name="Yamashita H."/>
            <person name="Murakawa K."/>
            <person name="Fujimori K."/>
            <person name="Tanai H."/>
            <person name="Kimata M."/>
            <person name="Watanabe M."/>
            <person name="Hiraoka S."/>
            <person name="Chiba Y."/>
            <person name="Ishida S."/>
            <person name="Ono Y."/>
            <person name="Takiguchi S."/>
            <person name="Watanabe S."/>
            <person name="Yosida M."/>
            <person name="Hotuta T."/>
            <person name="Kusano J."/>
            <person name="Kanehori K."/>
            <person name="Takahashi-Fujii A."/>
            <person name="Hara H."/>
            <person name="Tanase T.-O."/>
            <person name="Nomura Y."/>
            <person name="Togiya S."/>
            <person name="Komai F."/>
            <person name="Hara R."/>
            <person name="Takeuchi K."/>
            <person name="Arita M."/>
            <person name="Imose N."/>
            <person name="Musashino K."/>
            <person name="Yuuki H."/>
            <person name="Oshima A."/>
            <person name="Sasaki N."/>
            <person name="Aotsuka S."/>
            <person name="Yoshikawa Y."/>
            <person name="Matsunawa H."/>
            <person name="Ichihara T."/>
            <person name="Shiohata N."/>
            <person name="Sano S."/>
            <person name="Moriya S."/>
            <person name="Momiyama H."/>
            <person name="Satoh N."/>
            <person name="Takami S."/>
            <person name="Terashima Y."/>
            <person name="Suzuki O."/>
            <person name="Nakagawa S."/>
            <person name="Senoh A."/>
            <person name="Mizoguchi H."/>
            <person name="Goto Y."/>
            <person name="Shimizu F."/>
            <person name="Wakebe H."/>
            <person name="Hishigaki H."/>
            <person name="Watanabe T."/>
            <person name="Sugiyama A."/>
            <person name="Takemoto M."/>
            <person name="Kawakami B."/>
            <person name="Yamazaki M."/>
            <person name="Watanabe K."/>
            <person name="Kumagai A."/>
            <person name="Itakura S."/>
            <person name="Fukuzumi Y."/>
            <person name="Fujimori Y."/>
            <person name="Komiyama M."/>
            <person name="Tashiro H."/>
            <person name="Tanigami A."/>
            <person name="Fujiwara T."/>
            <person name="Ono T."/>
            <person name="Yamada K."/>
            <person name="Fujii Y."/>
            <person name="Ozaki K."/>
            <person name="Hirao M."/>
            <person name="Ohmori Y."/>
            <person name="Kawabata A."/>
            <person name="Hikiji T."/>
            <person name="Kobatake N."/>
            <person name="Inagaki H."/>
            <person name="Ikema Y."/>
            <person name="Okamoto S."/>
            <person name="Okitani R."/>
            <person name="Kawakami T."/>
            <person name="Noguchi S."/>
            <person name="Itoh T."/>
            <person name="Shigeta K."/>
            <person name="Senba T."/>
            <person name="Matsumura K."/>
            <person name="Nakajima Y."/>
            <person name="Mizuno T."/>
            <person name="Morinaga M."/>
            <person name="Sasaki M."/>
            <person name="Togashi T."/>
            <person name="Oyama M."/>
            <person name="Hata H."/>
            <person name="Watanabe M."/>
            <person name="Komatsu T."/>
            <person name="Mizushima-Sugano J."/>
            <person name="Satoh T."/>
            <person name="Shirai Y."/>
            <person name="Takahashi Y."/>
            <person name="Nakagawa K."/>
            <person name="Okumura K."/>
            <person name="Nagase T."/>
            <person name="Nomura N."/>
            <person name="Kikuchi H."/>
            <person name="Masuho Y."/>
            <person name="Yamashita R."/>
            <person name="Nakai K."/>
            <person name="Yada T."/>
            <person name="Nakamura Y."/>
            <person name="Ohara O."/>
            <person name="Isogai T."/>
            <person name="Sugano S."/>
        </authorList>
    </citation>
    <scope>NUCLEOTIDE SEQUENCE [LARGE SCALE MRNA] OF 1535-2070 (ISOFORM 1)</scope>
    <source>
        <tissue>Brain</tissue>
    </source>
</reference>
<reference key="8">
    <citation type="journal article" date="1998" name="FEBS Lett.">
        <title>Cloning and characterization of MUPP1, a novel PDZ domain protein.</title>
        <authorList>
            <person name="Ullmer C."/>
            <person name="Schmuck K."/>
            <person name="Figge A."/>
            <person name="Luebbert H."/>
        </authorList>
    </citation>
    <scope>NUCLEOTIDE SEQUENCE [MRNA] OF 1618-2070 (ISOFORM 1)</scope>
    <scope>TISSUE SPECIFICITY</scope>
    <scope>INTERACTION WITH HTR2C</scope>
    <scope>SUBCELLULAR LOCATION</scope>
    <source>
        <tissue>Brain</tissue>
    </source>
</reference>
<reference key="9">
    <citation type="journal article" date="2000" name="J. Virol.">
        <title>Multi-PDZ domain protein MUPP1 is a cellular target for both adenovirus E4-ORF1 and high-risk papillomavirus type 18 E6 oncoproteins.</title>
        <authorList>
            <person name="Lee S.S."/>
            <person name="Glaunsinger B."/>
            <person name="Mantovani F."/>
            <person name="Banks L."/>
            <person name="Javier R.T."/>
        </authorList>
    </citation>
    <scope>INTERACTION WITH HUMAN ADENOVIRUS TYPE 9 E4-ORF1 PROTEIN (MICROBIAL INFECTION) AND HUMAN PAPILLOMAVIRUS 18/HPV18 PROTEIN E6 (MICROBIAL INFECTION)</scope>
</reference>
<reference key="10">
    <citation type="journal article" date="2001" name="J. Biol. Chem.">
        <title>Interaction of serotonin 5-hydroxytryptamine type 2C receptors with PDZ10 of the multi-PDZ domain protein MUPP1.</title>
        <authorList>
            <person name="Becamel C."/>
            <person name="Figge A."/>
            <person name="Poliak S."/>
            <person name="Dumuis A."/>
            <person name="Peles E."/>
            <person name="Bockaert J."/>
            <person name="Luebbert H."/>
            <person name="Ullmer C."/>
        </authorList>
    </citation>
    <scope>INTERACTION WITH HTR2A; HTR2B AND HTR2C</scope>
    <scope>DOMAIN</scope>
    <scope>FUNCTION</scope>
</reference>
<reference key="11">
    <citation type="journal article" date="2002" name="Biochem. J.">
        <title>Evidence that the tandem-pleckstrin-homology-domain-containing protein TAPP1 interacts with Ptd(3,4)P2 and the multi-PDZ-domain-containing protein MUPP1 in vivo.</title>
        <authorList>
            <person name="Kimber W.A."/>
            <person name="Trinkle-Mulcahy L."/>
            <person name="Cheung P.C.F."/>
            <person name="Deak M."/>
            <person name="Marsden L.J."/>
            <person name="Kieloch A."/>
            <person name="Watt S."/>
            <person name="Javier R.T."/>
            <person name="Gray A."/>
            <person name="Downes C.P."/>
            <person name="Lucocq J.M."/>
            <person name="Alessi D.R."/>
        </authorList>
    </citation>
    <scope>INTERACTION WITH PLEKHA1 AND PLEKHA2</scope>
    <scope>DOMAIN</scope>
</reference>
<reference key="12">
    <citation type="journal article" date="2004" name="J. Biol. Chem.">
        <title>The coxsackievirus and adenovirus receptor interacts with the multi-PDZ domain protein-1 (MUPP-1) within the tight junction.</title>
        <authorList>
            <person name="Coyne C.B."/>
            <person name="Voelker T."/>
            <person name="Pichla S.L."/>
            <person name="Bergelson J.M."/>
        </authorList>
    </citation>
    <scope>INTERACTION WITH CXADR</scope>
    <scope>SUBCELLULAR LOCATION</scope>
</reference>
<reference key="13">
    <citation type="journal article" date="2004" name="J. Cell Sci.">
        <title>Crumbs homologue 1 is required for maintenance of photoreceptor cell polarization and adhesion during light exposure.</title>
        <authorList>
            <person name="van de Pavert S.A."/>
            <person name="Kantardzhieva A."/>
            <person name="Malysheva A."/>
            <person name="Meuleman J."/>
            <person name="Versteeg I."/>
            <person name="Levelt C."/>
            <person name="Klooster J."/>
            <person name="Geiger S."/>
            <person name="Seeliger M.W."/>
            <person name="Rashbass P."/>
            <person name="Le Bivic A."/>
            <person name="Wijnholds J."/>
        </authorList>
    </citation>
    <scope>INTERACTION WITH CRB1</scope>
    <scope>SUBCELLULAR LOCATION</scope>
</reference>
<reference key="14">
    <citation type="journal article" date="2004" name="Neuron">
        <title>SynGAP-MUPP1-CaMKII synaptic complexes regulate p38 MAP kinase activity and NMDA receptor-dependent synaptic AMPA receptor potentiation.</title>
        <authorList>
            <person name="Krapivinsky G."/>
            <person name="Medina I."/>
            <person name="Krapivinsky L."/>
            <person name="Gapon S."/>
            <person name="Clapham D.E."/>
        </authorList>
    </citation>
    <scope>INTERACTION WITH SYNGAP1; CAMK2A AND CAMK2B</scope>
    <scope>MUTAGENESIS OF 147-GLY--PHE-150</scope>
    <scope>DOMAIN</scope>
    <scope>FUNCTION</scope>
</reference>
<reference key="15">
    <citation type="journal article" date="2008" name="Proc. Natl. Acad. Sci. U.S.A.">
        <title>A quantitative atlas of mitotic phosphorylation.</title>
        <authorList>
            <person name="Dephoure N."/>
            <person name="Zhou C."/>
            <person name="Villen J."/>
            <person name="Beausoleil S.A."/>
            <person name="Bakalarski C.E."/>
            <person name="Elledge S.J."/>
            <person name="Gygi S.P."/>
        </authorList>
    </citation>
    <scope>PHOSPHORYLATION [LARGE SCALE ANALYSIS] AT SER-230</scope>
    <scope>IDENTIFICATION BY MASS SPECTROMETRY [LARGE SCALE ANALYSIS]</scope>
    <source>
        <tissue>Cervix carcinoma</tissue>
    </source>
</reference>
<reference key="16">
    <citation type="journal article" date="2009" name="Anal. Chem.">
        <title>Lys-N and trypsin cover complementary parts of the phosphoproteome in a refined SCX-based approach.</title>
        <authorList>
            <person name="Gauci S."/>
            <person name="Helbig A.O."/>
            <person name="Slijper M."/>
            <person name="Krijgsveld J."/>
            <person name="Heck A.J."/>
            <person name="Mohammed S."/>
        </authorList>
    </citation>
    <scope>IDENTIFICATION BY MASS SPECTROMETRY [LARGE SCALE ANALYSIS]</scope>
</reference>
<reference key="17">
    <citation type="journal article" date="2011" name="Sci. Signal.">
        <title>System-wide temporal characterization of the proteome and phosphoproteome of human embryonic stem cell differentiation.</title>
        <authorList>
            <person name="Rigbolt K.T."/>
            <person name="Prokhorova T.A."/>
            <person name="Akimov V."/>
            <person name="Henningsen J."/>
            <person name="Johansen P.T."/>
            <person name="Kratchmarova I."/>
            <person name="Kassem M."/>
            <person name="Mann M."/>
            <person name="Olsen J.V."/>
            <person name="Blagoev B."/>
        </authorList>
    </citation>
    <scope>PHOSPHORYLATION [LARGE SCALE ANALYSIS] AT SER-483</scope>
    <scope>IDENTIFICATION BY MASS SPECTROMETRY [LARGE SCALE ANALYSIS]</scope>
</reference>
<reference key="18">
    <citation type="journal article" date="2012" name="Proc. Natl. Acad. Sci. U.S.A.">
        <title>N-terminal acetylome analyses and functional insights of the N-terminal acetyltransferase NatB.</title>
        <authorList>
            <person name="Van Damme P."/>
            <person name="Lasa M."/>
            <person name="Polevoda B."/>
            <person name="Gazquez C."/>
            <person name="Elosegui-Artola A."/>
            <person name="Kim D.S."/>
            <person name="De Juan-Pardo E."/>
            <person name="Demeyer K."/>
            <person name="Hole K."/>
            <person name="Larrea E."/>
            <person name="Timmerman E."/>
            <person name="Prieto J."/>
            <person name="Arnesen T."/>
            <person name="Sherman F."/>
            <person name="Gevaert K."/>
            <person name="Aldabe R."/>
        </authorList>
    </citation>
    <scope>IDENTIFICATION BY MASS SPECTROMETRY [LARGE SCALE ANALYSIS]</scope>
</reference>
<reference key="19">
    <citation type="journal article" date="2013" name="J. Med. Genet.">
        <title>Mutation in MPDZ causes severe congenital hydrocephalus.</title>
        <authorList>
            <person name="Al-Dosari M.S."/>
            <person name="Al-Owain M."/>
            <person name="Tulbah M."/>
            <person name="Kurdi W."/>
            <person name="Adly N."/>
            <person name="Al-Hemidan A."/>
            <person name="Masoodi T.A."/>
            <person name="Albash B."/>
            <person name="Alkuraya F.S."/>
        </authorList>
    </citation>
    <scope>INVOLVEMENT IN HYC2</scope>
    <scope>VARIANT HYC2 210-GLN--SER-2070 DEL</scope>
</reference>
<reference key="20">
    <citation type="journal article" date="2013" name="J. Proteome Res.">
        <title>Toward a comprehensive characterization of a human cancer cell phosphoproteome.</title>
        <authorList>
            <person name="Zhou H."/>
            <person name="Di Palma S."/>
            <person name="Preisinger C."/>
            <person name="Peng M."/>
            <person name="Polat A.N."/>
            <person name="Heck A.J."/>
            <person name="Mohammed S."/>
        </authorList>
    </citation>
    <scope>PHOSPHORYLATION [LARGE SCALE ANALYSIS] AT SER-230 AND SER-483</scope>
    <scope>IDENTIFICATION BY MASS SPECTROMETRY [LARGE SCALE ANALYSIS]</scope>
    <source>
        <tissue>Cervix carcinoma</tissue>
        <tissue>Erythroleukemia</tissue>
    </source>
</reference>
<reference key="21">
    <citation type="journal article" date="2014" name="J. Proteomics">
        <title>An enzyme assisted RP-RPLC approach for in-depth analysis of human liver phosphoproteome.</title>
        <authorList>
            <person name="Bian Y."/>
            <person name="Song C."/>
            <person name="Cheng K."/>
            <person name="Dong M."/>
            <person name="Wang F."/>
            <person name="Huang J."/>
            <person name="Sun D."/>
            <person name="Wang L."/>
            <person name="Ye M."/>
            <person name="Zou H."/>
        </authorList>
    </citation>
    <scope>PHOSPHORYLATION [LARGE SCALE ANALYSIS] AT SER-483; SER-790; SER-1078 AND SER-1818</scope>
    <scope>IDENTIFICATION BY MASS SPECTROMETRY [LARGE SCALE ANALYSIS]</scope>
    <source>
        <tissue>Liver</tissue>
    </source>
</reference>
<reference key="22">
    <citation type="journal article" date="2017" name="Ann. Neurol.">
        <title>The genetic landscape of familial congenital hydrocephalus.</title>
        <authorList>
            <person name="Shaheen R."/>
            <person name="Sebai M.A."/>
            <person name="Patel N."/>
            <person name="Ewida N."/>
            <person name="Kurdi W."/>
            <person name="Altweijri I."/>
            <person name="Sogaty S."/>
            <person name="Almardawi E."/>
            <person name="Seidahmed M.Z."/>
            <person name="Alnemri A."/>
            <person name="Madirevula S."/>
            <person name="Ibrahim N."/>
            <person name="Abdulwahab F."/>
            <person name="Hashem M."/>
            <person name="Al-Sheddi T."/>
            <person name="Alomar R."/>
            <person name="Alobeid E."/>
            <person name="Sallout B."/>
            <person name="AlBaqawi B."/>
            <person name="AlAali W."/>
            <person name="Ajaji N."/>
            <person name="Lesmana H."/>
            <person name="Hopkin R.J."/>
            <person name="Dupuis L."/>
            <person name="Mendoza-Londono R."/>
            <person name="Al Rukban H."/>
            <person name="Yoon G."/>
            <person name="Faqeih E."/>
            <person name="Alkuraya F.S."/>
        </authorList>
    </citation>
    <scope>INVOLVEMENT IN HYC2</scope>
    <scope>VARIANTS HYC2 210-GLN--SER-2070 DEL; 744-ARG--SER-2070 DEL; 1071-ARG--SER-2070 DEL AND THR-1760</scope>
</reference>
<reference key="23">
    <citation type="journal article" date="2007" name="Protein Sci.">
        <title>Structure of PICK1 and other PDZ domains obtained with the help of self-binding C-terminal extensions.</title>
        <authorList>
            <person name="Elkins J.M."/>
            <person name="Papagrigoriou E."/>
            <person name="Berridge G."/>
            <person name="Yang X."/>
            <person name="Phillips C."/>
            <person name="Gileadi C."/>
            <person name="Savitsky P."/>
            <person name="Doyle D.A."/>
        </authorList>
    </citation>
    <scope>X-RAY CRYSTALLOGRAPHY (2.7 ANGSTROMS) OF 117-227</scope>
    <scope>X-RAY CRYSTALLOGRAPHY (1.35 ANGSTROMS) OF 373-463</scope>
    <scope>X-RAY CRYSTALLOGRAPHY (1.76 ANGSTROMS) OF 1148-1243</scope>
    <scope>X-RAY CRYSTALLOGRAPHY (1.5 ANGSTROMS) OF 1625-1716</scope>
    <scope>X-RAY CRYSTALLOGRAPHY (1.4 ANGSTROMS) OF 1722-1806</scope>
    <scope>X-RAY CRYSTALLOGRAPHY (1.7 ANGSTROMS) OF 1859-1951</scope>
    <scope>X-RAY CRYSTALLOGRAPHY (1.83 ANGSTROMS) OF 1983-2070</scope>
</reference>
<proteinExistence type="evidence at protein level"/>
<feature type="chain" id="PRO_0000094594" description="Multiple PDZ domain protein">
    <location>
        <begin position="1"/>
        <end position="2070"/>
    </location>
</feature>
<feature type="domain" description="L27" evidence="5">
    <location>
        <begin position="1"/>
        <end position="63"/>
    </location>
</feature>
<feature type="domain" description="PDZ 1" evidence="4">
    <location>
        <begin position="137"/>
        <end position="224"/>
    </location>
</feature>
<feature type="domain" description="PDZ 2" evidence="4">
    <location>
        <begin position="257"/>
        <end position="337"/>
    </location>
</feature>
<feature type="domain" description="PDZ 3" evidence="4">
    <location>
        <begin position="377"/>
        <end position="463"/>
    </location>
</feature>
<feature type="domain" description="PDZ 4" evidence="4">
    <location>
        <begin position="553"/>
        <end position="634"/>
    </location>
</feature>
<feature type="domain" description="PDZ 5" evidence="4">
    <location>
        <begin position="700"/>
        <end position="786"/>
    </location>
</feature>
<feature type="domain" description="PDZ 6" evidence="4">
    <location>
        <begin position="1008"/>
        <end position="1089"/>
    </location>
</feature>
<feature type="domain" description="PDZ 7" evidence="4">
    <location>
        <begin position="1151"/>
        <end position="1243"/>
    </location>
</feature>
<feature type="domain" description="PDZ 8" evidence="4">
    <location>
        <begin position="1350"/>
        <end position="1433"/>
    </location>
</feature>
<feature type="domain" description="PDZ 9" evidence="4">
    <location>
        <begin position="1483"/>
        <end position="1564"/>
    </location>
</feature>
<feature type="domain" description="PDZ 10" evidence="4">
    <location>
        <begin position="1629"/>
        <end position="1712"/>
    </location>
</feature>
<feature type="domain" description="PDZ 11" evidence="4">
    <location>
        <begin position="1725"/>
        <end position="1807"/>
    </location>
</feature>
<feature type="domain" description="PDZ 12" evidence="4">
    <location>
        <begin position="1862"/>
        <end position="1948"/>
    </location>
</feature>
<feature type="domain" description="PDZ 13" evidence="4">
    <location>
        <begin position="1987"/>
        <end position="2070"/>
    </location>
</feature>
<feature type="region of interest" description="Disordered" evidence="6">
    <location>
        <begin position="1121"/>
        <end position="1140"/>
    </location>
</feature>
<feature type="region of interest" description="Disordered" evidence="6">
    <location>
        <begin position="1278"/>
        <end position="1324"/>
    </location>
</feature>
<feature type="region of interest" description="Disordered" evidence="6">
    <location>
        <begin position="1567"/>
        <end position="1612"/>
    </location>
</feature>
<feature type="compositionally biased region" description="Polar residues" evidence="6">
    <location>
        <begin position="1311"/>
        <end position="1321"/>
    </location>
</feature>
<feature type="compositionally biased region" description="Polar residues" evidence="6">
    <location>
        <begin position="1584"/>
        <end position="1610"/>
    </location>
</feature>
<feature type="modified residue" description="Phosphoserine" evidence="19 21">
    <location>
        <position position="230"/>
    </location>
</feature>
<feature type="modified residue" description="Phosphoserine" evidence="20 21 22">
    <location>
        <position position="483"/>
    </location>
</feature>
<feature type="modified residue" description="Phosphoserine" evidence="22">
    <location>
        <position position="790"/>
    </location>
</feature>
<feature type="modified residue" description="Phosphoserine" evidence="22">
    <location>
        <position position="1078"/>
    </location>
</feature>
<feature type="modified residue" description="Omega-N-methylarginine" evidence="3">
    <location>
        <position position="1170"/>
    </location>
</feature>
<feature type="modified residue" description="Phosphoserine" evidence="22">
    <location>
        <position position="1818"/>
    </location>
</feature>
<feature type="modified residue" description="Phosphoserine" evidence="2">
    <location>
        <position position="1824"/>
    </location>
</feature>
<feature type="splice variant" id="VSP_040450" description="In isoform 3 and isoform 4." evidence="16">
    <location>
        <begin position="1248"/>
        <end position="1280"/>
    </location>
</feature>
<feature type="splice variant" id="VSP_040451" description="In isoform 2 and isoform 4." evidence="16 17">
    <location>
        <begin position="1794"/>
        <end position="1822"/>
    </location>
</feature>
<feature type="sequence variant" id="VAR_056115" description="In dbSNP:rs17273542.">
    <original>S</original>
    <variation>L</variation>
    <location>
        <position position="92"/>
    </location>
</feature>
<feature type="sequence variant" id="VAR_081122" description="In HYC2; dbSNP:rs372127610." evidence="13 14">
    <location>
        <begin position="210"/>
        <end position="2070"/>
    </location>
</feature>
<feature type="sequence variant" id="VAR_056116" description="In dbSNP:rs3739757.">
    <original>L</original>
    <variation>F</variation>
    <location>
        <position position="351"/>
    </location>
</feature>
<feature type="sequence variant" id="VAR_056117" description="In dbSNP:rs4741289.">
    <original>E</original>
    <variation>K</variation>
    <location>
        <position position="702"/>
    </location>
</feature>
<feature type="sequence variant" id="VAR_056118" description="In dbSNP:rs4740548.">
    <original>E</original>
    <variation>V</variation>
    <location>
        <position position="702"/>
    </location>
</feature>
<feature type="sequence variant" id="VAR_081123" description="In HYC2; dbSNP:rs922703465." evidence="14">
    <location>
        <begin position="744"/>
        <end position="2070"/>
    </location>
</feature>
<feature type="sequence variant" id="VAR_081124" description="In HYC2; dbSNP:rs376078512." evidence="14">
    <location>
        <begin position="1071"/>
        <end position="2070"/>
    </location>
</feature>
<feature type="sequence variant" id="VAR_056119" description="In dbSNP:rs16930134.">
    <original>T</original>
    <variation>A</variation>
    <location>
        <position position="1604"/>
    </location>
</feature>
<feature type="sequence variant" id="VAR_056120" description="In dbSNP:rs2274648.">
    <original>G</original>
    <variation>R</variation>
    <location>
        <position position="1663"/>
    </location>
</feature>
<feature type="sequence variant" id="VAR_081125" description="In HYC2; uncertain significance; dbSNP:rs1554644827." evidence="14">
    <original>A</original>
    <variation>T</variation>
    <location>
        <position position="1760"/>
    </location>
</feature>
<feature type="mutagenesis site" description="Loss of interaction with CAMK2A." evidence="10">
    <original>GLGF</original>
    <variation>PSES</variation>
    <location>
        <begin position="147"/>
        <end position="150"/>
    </location>
</feature>
<feature type="sequence conflict" description="In Ref. 6; CAI56786." evidence="18" ref="6">
    <original>V</original>
    <variation>M</variation>
    <location>
        <position position="1950"/>
    </location>
</feature>
<feature type="helix" evidence="27">
    <location>
        <begin position="120"/>
        <end position="130"/>
    </location>
</feature>
<feature type="strand" evidence="27">
    <location>
        <begin position="135"/>
        <end position="141"/>
    </location>
</feature>
<feature type="strand" evidence="27">
    <location>
        <begin position="144"/>
        <end position="146"/>
    </location>
</feature>
<feature type="strand" evidence="27">
    <location>
        <begin position="152"/>
        <end position="156"/>
    </location>
</feature>
<feature type="strand" evidence="27">
    <location>
        <begin position="163"/>
        <end position="167"/>
    </location>
</feature>
<feature type="helix" evidence="27">
    <location>
        <begin position="175"/>
        <end position="179"/>
    </location>
</feature>
<feature type="strand" evidence="27">
    <location>
        <begin position="187"/>
        <end position="191"/>
    </location>
</feature>
<feature type="helix" evidence="27">
    <location>
        <begin position="202"/>
        <end position="211"/>
    </location>
</feature>
<feature type="strand" evidence="27">
    <location>
        <begin position="214"/>
        <end position="223"/>
    </location>
</feature>
<feature type="strand" evidence="25">
    <location>
        <begin position="373"/>
        <end position="381"/>
    </location>
</feature>
<feature type="strand" evidence="25">
    <location>
        <begin position="389"/>
        <end position="392"/>
    </location>
</feature>
<feature type="strand" evidence="25">
    <location>
        <begin position="406"/>
        <end position="410"/>
    </location>
</feature>
<feature type="helix" evidence="25">
    <location>
        <begin position="415"/>
        <end position="419"/>
    </location>
</feature>
<feature type="strand" evidence="25">
    <location>
        <begin position="427"/>
        <end position="431"/>
    </location>
</feature>
<feature type="helix" evidence="25">
    <location>
        <begin position="441"/>
        <end position="449"/>
    </location>
</feature>
<feature type="strand" evidence="25">
    <location>
        <begin position="453"/>
        <end position="463"/>
    </location>
</feature>
<feature type="strand" evidence="23">
    <location>
        <begin position="1150"/>
        <end position="1154"/>
    </location>
</feature>
<feature type="strand" evidence="23">
    <location>
        <begin position="1164"/>
        <end position="1167"/>
    </location>
</feature>
<feature type="strand" evidence="23">
    <location>
        <begin position="1185"/>
        <end position="1190"/>
    </location>
</feature>
<feature type="strand" evidence="23">
    <location>
        <begin position="1192"/>
        <end position="1194"/>
    </location>
</feature>
<feature type="helix" evidence="23">
    <location>
        <begin position="1195"/>
        <end position="1199"/>
    </location>
</feature>
<feature type="strand" evidence="23">
    <location>
        <begin position="1207"/>
        <end position="1211"/>
    </location>
</feature>
<feature type="helix" evidence="23">
    <location>
        <begin position="1221"/>
        <end position="1229"/>
    </location>
</feature>
<feature type="strand" evidence="23">
    <location>
        <begin position="1233"/>
        <end position="1240"/>
    </location>
</feature>
<feature type="strand" evidence="28">
    <location>
        <begin position="1626"/>
        <end position="1633"/>
    </location>
</feature>
<feature type="strand" evidence="28">
    <location>
        <begin position="1641"/>
        <end position="1645"/>
    </location>
</feature>
<feature type="strand" evidence="28">
    <location>
        <begin position="1653"/>
        <end position="1659"/>
    </location>
</feature>
<feature type="helix" evidence="28">
    <location>
        <begin position="1664"/>
        <end position="1668"/>
    </location>
</feature>
<feature type="strand" evidence="28">
    <location>
        <begin position="1676"/>
        <end position="1680"/>
    </location>
</feature>
<feature type="helix" evidence="28">
    <location>
        <begin position="1690"/>
        <end position="1698"/>
    </location>
</feature>
<feature type="strand" evidence="28">
    <location>
        <begin position="1702"/>
        <end position="1710"/>
    </location>
</feature>
<feature type="strand" evidence="29">
    <location>
        <begin position="1723"/>
        <end position="1729"/>
    </location>
</feature>
<feature type="strand" evidence="29">
    <location>
        <begin position="1737"/>
        <end position="1741"/>
    </location>
</feature>
<feature type="strand" evidence="29">
    <location>
        <begin position="1744"/>
        <end position="1746"/>
    </location>
</feature>
<feature type="strand" evidence="29">
    <location>
        <begin position="1750"/>
        <end position="1754"/>
    </location>
</feature>
<feature type="helix" evidence="29">
    <location>
        <begin position="1759"/>
        <end position="1763"/>
    </location>
</feature>
<feature type="strand" evidence="29">
    <location>
        <begin position="1771"/>
        <end position="1775"/>
    </location>
</feature>
<feature type="helix" evidence="29">
    <location>
        <begin position="1785"/>
        <end position="1794"/>
    </location>
</feature>
<feature type="strand" evidence="29">
    <location>
        <begin position="1797"/>
        <end position="1804"/>
    </location>
</feature>
<feature type="strand" evidence="26">
    <location>
        <begin position="1861"/>
        <end position="1866"/>
    </location>
</feature>
<feature type="turn" evidence="26">
    <location>
        <begin position="1869"/>
        <end position="1871"/>
    </location>
</feature>
<feature type="strand" evidence="26">
    <location>
        <begin position="1875"/>
        <end position="1883"/>
    </location>
</feature>
<feature type="strand" evidence="26">
    <location>
        <begin position="1886"/>
        <end position="1895"/>
    </location>
</feature>
<feature type="helix" evidence="26">
    <location>
        <begin position="1900"/>
        <end position="1904"/>
    </location>
</feature>
<feature type="strand" evidence="26">
    <location>
        <begin position="1912"/>
        <end position="1916"/>
    </location>
</feature>
<feature type="helix" evidence="26">
    <location>
        <begin position="1926"/>
        <end position="1935"/>
    </location>
</feature>
<feature type="strand" evidence="26">
    <location>
        <begin position="1938"/>
        <end position="1945"/>
    </location>
</feature>
<feature type="strand" evidence="24">
    <location>
        <begin position="1984"/>
        <end position="1990"/>
    </location>
</feature>
<feature type="strand" evidence="24">
    <location>
        <begin position="1998"/>
        <end position="2007"/>
    </location>
</feature>
<feature type="strand" evidence="24">
    <location>
        <begin position="2010"/>
        <end position="2019"/>
    </location>
</feature>
<feature type="helix" evidence="24">
    <location>
        <begin position="2024"/>
        <end position="2028"/>
    </location>
</feature>
<feature type="strand" evidence="24">
    <location>
        <begin position="2036"/>
        <end position="2040"/>
    </location>
</feature>
<feature type="helix" evidence="24">
    <location>
        <begin position="2050"/>
        <end position="2059"/>
    </location>
</feature>
<feature type="strand" evidence="24">
    <location>
        <begin position="2062"/>
        <end position="2070"/>
    </location>
</feature>
<protein>
    <recommendedName>
        <fullName>Multiple PDZ domain protein</fullName>
    </recommendedName>
    <alternativeName>
        <fullName>Multi-PDZ domain protein 1</fullName>
    </alternativeName>
</protein>